<protein>
    <recommendedName>
        <fullName evidence="1">Large ribosomal subunit protein uL16</fullName>
    </recommendedName>
    <alternativeName>
        <fullName evidence="2">50S ribosomal protein L10e</fullName>
    </alternativeName>
</protein>
<gene>
    <name evidence="1" type="primary">rpl10e</name>
    <name type="ordered locus">PAE3567</name>
</gene>
<proteinExistence type="inferred from homology"/>
<comment type="similarity">
    <text evidence="1">Belongs to the universal ribosomal protein uL16 family.</text>
</comment>
<organism>
    <name type="scientific">Pyrobaculum aerophilum (strain ATCC 51768 / DSM 7523 / JCM 9630 / CIP 104966 / NBRC 100827 / IM2)</name>
    <dbReference type="NCBI Taxonomy" id="178306"/>
    <lineage>
        <taxon>Archaea</taxon>
        <taxon>Thermoproteota</taxon>
        <taxon>Thermoprotei</taxon>
        <taxon>Thermoproteales</taxon>
        <taxon>Thermoproteaceae</taxon>
        <taxon>Pyrobaculum</taxon>
    </lineage>
</organism>
<accession>Q8ZSV4</accession>
<feature type="chain" id="PRO_0000147143" description="Large ribosomal subunit protein uL16">
    <location>
        <begin position="1"/>
        <end position="180"/>
    </location>
</feature>
<keyword id="KW-1185">Reference proteome</keyword>
<keyword id="KW-0687">Ribonucleoprotein</keyword>
<keyword id="KW-0689">Ribosomal protein</keyword>
<dbReference type="EMBL" id="AE009441">
    <property type="protein sequence ID" value="AAL65009.1"/>
    <property type="molecule type" value="Genomic_DNA"/>
</dbReference>
<dbReference type="RefSeq" id="WP_011009476.1">
    <property type="nucleotide sequence ID" value="NC_003364.1"/>
</dbReference>
<dbReference type="SMR" id="Q8ZSV4"/>
<dbReference type="FunCoup" id="Q8ZSV4">
    <property type="interactions" value="167"/>
</dbReference>
<dbReference type="STRING" id="178306.PAE3567"/>
<dbReference type="EnsemblBacteria" id="AAL65009">
    <property type="protein sequence ID" value="AAL65009"/>
    <property type="gene ID" value="PAE3567"/>
</dbReference>
<dbReference type="GeneID" id="1466143"/>
<dbReference type="KEGG" id="pai:PAE3567"/>
<dbReference type="PATRIC" id="fig|178306.9.peg.2685"/>
<dbReference type="eggNOG" id="arCOG04113">
    <property type="taxonomic scope" value="Archaea"/>
</dbReference>
<dbReference type="HOGENOM" id="CLU_084051_0_2_2"/>
<dbReference type="InParanoid" id="Q8ZSV4"/>
<dbReference type="Proteomes" id="UP000002439">
    <property type="component" value="Chromosome"/>
</dbReference>
<dbReference type="GO" id="GO:0022625">
    <property type="term" value="C:cytosolic large ribosomal subunit"/>
    <property type="evidence" value="ECO:0000318"/>
    <property type="project" value="GO_Central"/>
</dbReference>
<dbReference type="GO" id="GO:0003735">
    <property type="term" value="F:structural constituent of ribosome"/>
    <property type="evidence" value="ECO:0000318"/>
    <property type="project" value="GO_Central"/>
</dbReference>
<dbReference type="GO" id="GO:0006412">
    <property type="term" value="P:translation"/>
    <property type="evidence" value="ECO:0000318"/>
    <property type="project" value="GO_Central"/>
</dbReference>
<dbReference type="CDD" id="cd01433">
    <property type="entry name" value="Ribosomal_L16_L10e"/>
    <property type="match status" value="1"/>
</dbReference>
<dbReference type="FunFam" id="3.90.1170.10:FF:000008">
    <property type="entry name" value="50S ribosomal protein L10e"/>
    <property type="match status" value="1"/>
</dbReference>
<dbReference type="Gene3D" id="3.90.1170.10">
    <property type="entry name" value="Ribosomal protein L10e/L16"/>
    <property type="match status" value="1"/>
</dbReference>
<dbReference type="HAMAP" id="MF_00448">
    <property type="entry name" value="Ribosomal_uL16_arch"/>
    <property type="match status" value="1"/>
</dbReference>
<dbReference type="InterPro" id="IPR047873">
    <property type="entry name" value="Ribosomal_uL16"/>
</dbReference>
<dbReference type="InterPro" id="IPR022981">
    <property type="entry name" value="Ribosomal_uL16_arc"/>
</dbReference>
<dbReference type="InterPro" id="IPR018255">
    <property type="entry name" value="Ribosomal_uL16_CS_euk_arc"/>
</dbReference>
<dbReference type="InterPro" id="IPR016180">
    <property type="entry name" value="Ribosomal_uL16_dom"/>
</dbReference>
<dbReference type="InterPro" id="IPR001197">
    <property type="entry name" value="Ribosomal_uL16_euk_arch"/>
</dbReference>
<dbReference type="InterPro" id="IPR036920">
    <property type="entry name" value="Ribosomal_uL16_sf"/>
</dbReference>
<dbReference type="NCBIfam" id="NF003236">
    <property type="entry name" value="PRK04199.1-1"/>
    <property type="match status" value="1"/>
</dbReference>
<dbReference type="NCBIfam" id="NF003239">
    <property type="entry name" value="PRK04199.1-4"/>
    <property type="match status" value="1"/>
</dbReference>
<dbReference type="PANTHER" id="PTHR11726">
    <property type="entry name" value="60S RIBOSOMAL PROTEIN L10"/>
    <property type="match status" value="1"/>
</dbReference>
<dbReference type="Pfam" id="PF00252">
    <property type="entry name" value="Ribosomal_L16"/>
    <property type="match status" value="1"/>
</dbReference>
<dbReference type="PIRSF" id="PIRSF005590">
    <property type="entry name" value="Ribosomal_L10"/>
    <property type="match status" value="1"/>
</dbReference>
<dbReference type="SUPFAM" id="SSF54686">
    <property type="entry name" value="Ribosomal protein L16p/L10e"/>
    <property type="match status" value="1"/>
</dbReference>
<dbReference type="PROSITE" id="PS01257">
    <property type="entry name" value="RIBOSOMAL_L10E"/>
    <property type="match status" value="1"/>
</dbReference>
<reference key="1">
    <citation type="journal article" date="2002" name="Proc. Natl. Acad. Sci. U.S.A.">
        <title>Genome sequence of the hyperthermophilic crenarchaeon Pyrobaculum aerophilum.</title>
        <authorList>
            <person name="Fitz-Gibbon S.T."/>
            <person name="Ladner H."/>
            <person name="Kim U.-J."/>
            <person name="Stetter K.O."/>
            <person name="Simon M.I."/>
            <person name="Miller J.H."/>
        </authorList>
    </citation>
    <scope>NUCLEOTIDE SEQUENCE [LARGE SCALE GENOMIC DNA]</scope>
    <source>
        <strain>ATCC 51768 / DSM 7523 / JCM 9630 / CIP 104966 / NBRC 100827 / IM2</strain>
    </source>
</reference>
<name>RL10E_PYRAE</name>
<evidence type="ECO:0000255" key="1">
    <source>
        <dbReference type="HAMAP-Rule" id="MF_00448"/>
    </source>
</evidence>
<evidence type="ECO:0000305" key="2"/>
<sequence length="180" mass="20160">MPVRPARCYKRIKGPPYTREEYIHGAPMIQIPKFDMGTTSAAARTAFTMTAKLVVEERGQIRMQALEAARQMASKYLTKYVGDANYYLRLNVVPHHVLRENRMLAMAGADRLQEGMRLAFGSPAGRAARVEPGQVLFYAEFKPEHLPHIKEALRRAASKLPLPTRIVIEPKGNGGNKTVT</sequence>